<accession>P90745</accession>
<organism evidence="6">
    <name type="scientific">Caenorhabditis elegans</name>
    <dbReference type="NCBI Taxonomy" id="6239"/>
    <lineage>
        <taxon>Eukaryota</taxon>
        <taxon>Metazoa</taxon>
        <taxon>Ecdysozoa</taxon>
        <taxon>Nematoda</taxon>
        <taxon>Chromadorea</taxon>
        <taxon>Rhabditida</taxon>
        <taxon>Rhabditina</taxon>
        <taxon>Rhabditomorpha</taxon>
        <taxon>Rhabditoidea</taxon>
        <taxon>Rhabditidae</taxon>
        <taxon>Peloderinae</taxon>
        <taxon>Caenorhabditis</taxon>
    </lineage>
</organism>
<protein>
    <recommendedName>
        <fullName evidence="7">Neuropeptide receptor 3</fullName>
    </recommendedName>
    <alternativeName>
        <fullName>FLP15 receptor</fullName>
        <shortName evidence="4">FLP15-R</shortName>
    </alternativeName>
</protein>
<sequence length="376" mass="42615">MEGGRNCVMTVQQWQPEYNDMNQIRAIFSLLYLLVWVGAIVGNTLVLYVLTFNQVSLSVRTVFVGCLAGSDLLMCLFSLPITAISIFSRVWVFPAIFCKLIGVFQGGTIFVSSFTLTVIALDRCVLILRPNQEIVNFPRAVFIVFCIWLLGYSLALPVGIYSDIAVYDEICGTFCEENWPDFNPDTGRSGIRRAYGLSVLVLQFGIPALISSICYWMISRVMSDQLARRRGHNIRPESETKLVNRKTRANRMMIVMVVGFVLAWMPFNAVNLYRDLFGISKWYSTVFALCHVCAMCSAVLNPIIYSWFNPQFRQSITTLFKGTDEARLIKKKPQSTSKMVSYPTNFSEIRKETEIASTKTKITIAENDYRAGDQLL</sequence>
<keyword id="KW-1003">Cell membrane</keyword>
<keyword id="KW-1015">Disulfide bond</keyword>
<keyword id="KW-0297">G-protein coupled receptor</keyword>
<keyword id="KW-0472">Membrane</keyword>
<keyword id="KW-0675">Receptor</keyword>
<keyword id="KW-1185">Reference proteome</keyword>
<keyword id="KW-0807">Transducer</keyword>
<keyword id="KW-0812">Transmembrane</keyword>
<keyword id="KW-1133">Transmembrane helix</keyword>
<dbReference type="EMBL" id="BX284604">
    <property type="protein sequence ID" value="CAB05681.1"/>
    <property type="molecule type" value="Genomic_DNA"/>
</dbReference>
<dbReference type="PIR" id="T19186">
    <property type="entry name" value="T19186"/>
</dbReference>
<dbReference type="RefSeq" id="NP_502162.1">
    <property type="nucleotide sequence ID" value="NM_069761.4"/>
</dbReference>
<dbReference type="SMR" id="P90745"/>
<dbReference type="DIP" id="DIP-27486N"/>
<dbReference type="STRING" id="6239.C10C6.2.1"/>
<dbReference type="PaxDb" id="6239-C10C6.2"/>
<dbReference type="EnsemblMetazoa" id="C10C6.2.1">
    <property type="protein sequence ID" value="C10C6.2.1"/>
    <property type="gene ID" value="WBGene00007006"/>
</dbReference>
<dbReference type="GeneID" id="182494"/>
<dbReference type="KEGG" id="cel:CELE_C10C6.2"/>
<dbReference type="UCSC" id="C10C6.2">
    <property type="organism name" value="c. elegans"/>
</dbReference>
<dbReference type="AGR" id="WB:WBGene00007006"/>
<dbReference type="CTD" id="182494"/>
<dbReference type="WormBase" id="C10C6.2">
    <property type="protein sequence ID" value="CE08056"/>
    <property type="gene ID" value="WBGene00007006"/>
    <property type="gene designation" value="npr-3"/>
</dbReference>
<dbReference type="eggNOG" id="KOG3656">
    <property type="taxonomic scope" value="Eukaryota"/>
</dbReference>
<dbReference type="GeneTree" id="ENSGT00940000167027"/>
<dbReference type="HOGENOM" id="CLU_009579_6_1_1"/>
<dbReference type="InParanoid" id="P90745"/>
<dbReference type="OMA" id="VIYSWFN"/>
<dbReference type="OrthoDB" id="9046662at2759"/>
<dbReference type="PhylomeDB" id="P90745"/>
<dbReference type="Proteomes" id="UP000001940">
    <property type="component" value="Chromosome IV"/>
</dbReference>
<dbReference type="Bgee" id="WBGene00007006">
    <property type="expression patterns" value="Expressed in larva and 3 other cell types or tissues"/>
</dbReference>
<dbReference type="GO" id="GO:0005886">
    <property type="term" value="C:plasma membrane"/>
    <property type="evidence" value="ECO:0000318"/>
    <property type="project" value="GO_Central"/>
</dbReference>
<dbReference type="GO" id="GO:0008020">
    <property type="term" value="F:G protein-coupled photoreceptor activity"/>
    <property type="evidence" value="ECO:0000318"/>
    <property type="project" value="GO_Central"/>
</dbReference>
<dbReference type="GO" id="GO:0071482">
    <property type="term" value="P:cellular response to light stimulus"/>
    <property type="evidence" value="ECO:0000318"/>
    <property type="project" value="GO_Central"/>
</dbReference>
<dbReference type="GO" id="GO:0007186">
    <property type="term" value="P:G protein-coupled receptor signaling pathway"/>
    <property type="evidence" value="ECO:0000318"/>
    <property type="project" value="GO_Central"/>
</dbReference>
<dbReference type="GO" id="GO:0007602">
    <property type="term" value="P:phototransduction"/>
    <property type="evidence" value="ECO:0000318"/>
    <property type="project" value="GO_Central"/>
</dbReference>
<dbReference type="CDD" id="cd15203">
    <property type="entry name" value="7tmA_NPYR-like"/>
    <property type="match status" value="1"/>
</dbReference>
<dbReference type="FunFam" id="1.20.1070.10:FF:000630">
    <property type="entry name" value="NeuroPeptide Receptor family"/>
    <property type="match status" value="1"/>
</dbReference>
<dbReference type="Gene3D" id="1.20.1070.10">
    <property type="entry name" value="Rhodopsin 7-helix transmembrane proteins"/>
    <property type="match status" value="1"/>
</dbReference>
<dbReference type="InterPro" id="IPR000276">
    <property type="entry name" value="GPCR_Rhodpsn"/>
</dbReference>
<dbReference type="InterPro" id="IPR017452">
    <property type="entry name" value="GPCR_Rhodpsn_7TM"/>
</dbReference>
<dbReference type="PANTHER" id="PTHR24235:SF18">
    <property type="entry name" value="G-PROTEIN COUPLED RECEPTORS FAMILY 1 PROFILE DOMAIN-CONTAINING PROTEIN"/>
    <property type="match status" value="1"/>
</dbReference>
<dbReference type="PANTHER" id="PTHR24235">
    <property type="entry name" value="NEUROPEPTIDE Y RECEPTOR"/>
    <property type="match status" value="1"/>
</dbReference>
<dbReference type="Pfam" id="PF00001">
    <property type="entry name" value="7tm_1"/>
    <property type="match status" value="1"/>
</dbReference>
<dbReference type="PRINTS" id="PR00237">
    <property type="entry name" value="GPCRRHODOPSN"/>
</dbReference>
<dbReference type="SUPFAM" id="SSF81321">
    <property type="entry name" value="Family A G protein-coupled receptor-like"/>
    <property type="match status" value="1"/>
</dbReference>
<dbReference type="PROSITE" id="PS00237">
    <property type="entry name" value="G_PROTEIN_RECEP_F1_1"/>
    <property type="match status" value="1"/>
</dbReference>
<dbReference type="PROSITE" id="PS50262">
    <property type="entry name" value="G_PROTEIN_RECEP_F1_2"/>
    <property type="match status" value="1"/>
</dbReference>
<comment type="function">
    <text evidence="3">G-protein coupled receptor for flp-15 neuropeptides (PubMed:12937167). Receptor activation assays suggest binding to predicted flp-15 peptides, GGPQGPLRF-NH2 and RGPSGPLRF-NH2 (PubMed:12937167). Likely involved in Gi/Go-coupled signaling pathways (PubMed:12937167).</text>
</comment>
<comment type="subcellular location">
    <subcellularLocation>
        <location evidence="3">Cell membrane</location>
        <topology evidence="1">Multi-pass membrane protein</topology>
    </subcellularLocation>
</comment>
<comment type="miscellaneous">
    <text evidence="3">Functional expression in mammalian cells is temperature-dependent and requires a temperature shift from 37 to 28 degrees Celsius for receptor activation.</text>
</comment>
<comment type="similarity">
    <text evidence="2">Belongs to the G-protein coupled receptor 1 family.</text>
</comment>
<gene>
    <name evidence="7" type="primary">npr-3</name>
    <name evidence="7" type="ORF">C10C6.2</name>
</gene>
<proteinExistence type="inferred from homology"/>
<evidence type="ECO:0000255" key="1"/>
<evidence type="ECO:0000255" key="2">
    <source>
        <dbReference type="PROSITE-ProRule" id="PRU00521"/>
    </source>
</evidence>
<evidence type="ECO:0000269" key="3">
    <source>
    </source>
</evidence>
<evidence type="ECO:0000303" key="4">
    <source>
    </source>
</evidence>
<evidence type="ECO:0000305" key="5"/>
<evidence type="ECO:0000312" key="6">
    <source>
        <dbReference type="Proteomes" id="UP000001940"/>
    </source>
</evidence>
<evidence type="ECO:0000312" key="7">
    <source>
        <dbReference type="WormBase" id="C10C6.2"/>
    </source>
</evidence>
<name>NPR3_CAEEL</name>
<reference evidence="6" key="1">
    <citation type="journal article" date="1998" name="Science">
        <title>Genome sequence of the nematode C. elegans: a platform for investigating biology.</title>
        <authorList>
            <consortium name="The C. elegans sequencing consortium"/>
        </authorList>
    </citation>
    <scope>NUCLEOTIDE SEQUENCE [LARGE SCALE GENOMIC DNA]</scope>
    <source>
        <strain evidence="6">Bristol N2</strain>
    </source>
</reference>
<reference evidence="5" key="2">
    <citation type="journal article" date="2003" name="J. Biol. Chem.">
        <title>Functional annotation of the putative orphan Caenorhabditis elegans G-protein-coupled receptor C10C6.2 as a FLP15 peptide receptor.</title>
        <authorList>
            <person name="Kubiak T.M."/>
            <person name="Larsen M.J."/>
            <person name="Zantello M.R."/>
            <person name="Bowman J.W."/>
            <person name="Nulf S.C."/>
            <person name="Lowery D.E."/>
        </authorList>
    </citation>
    <scope>FUNCTION</scope>
    <scope>SUBCELLULAR LOCATION</scope>
</reference>
<feature type="chain" id="PRO_0000460459" description="Neuropeptide receptor 3">
    <location>
        <begin position="1"/>
        <end position="376"/>
    </location>
</feature>
<feature type="topological domain" description="Extracellular" evidence="5">
    <location>
        <begin position="1"/>
        <end position="29"/>
    </location>
</feature>
<feature type="transmembrane region" description="Helical; Name=1" evidence="1">
    <location>
        <begin position="30"/>
        <end position="50"/>
    </location>
</feature>
<feature type="topological domain" description="Cytoplasmic" evidence="5">
    <location>
        <begin position="51"/>
        <end position="66"/>
    </location>
</feature>
<feature type="transmembrane region" description="Helical; Name=2" evidence="1">
    <location>
        <begin position="67"/>
        <end position="87"/>
    </location>
</feature>
<feature type="topological domain" description="Extracellular" evidence="5">
    <location>
        <begin position="88"/>
        <end position="89"/>
    </location>
</feature>
<feature type="transmembrane region" description="Helical; Name=3" evidence="1">
    <location>
        <begin position="90"/>
        <end position="110"/>
    </location>
</feature>
<feature type="topological domain" description="Cytoplasmic" evidence="5">
    <location>
        <begin position="111"/>
        <end position="139"/>
    </location>
</feature>
<feature type="transmembrane region" description="Helical; Name=4" evidence="1">
    <location>
        <begin position="140"/>
        <end position="160"/>
    </location>
</feature>
<feature type="topological domain" description="Extracellular" evidence="5">
    <location>
        <begin position="161"/>
        <end position="197"/>
    </location>
</feature>
<feature type="transmembrane region" description="Helical; Name=5" evidence="1">
    <location>
        <begin position="198"/>
        <end position="218"/>
    </location>
</feature>
<feature type="topological domain" description="Cytoplasmic" evidence="5">
    <location>
        <begin position="219"/>
        <end position="251"/>
    </location>
</feature>
<feature type="transmembrane region" description="Helical; Name=6" evidence="1">
    <location>
        <begin position="252"/>
        <end position="272"/>
    </location>
</feature>
<feature type="topological domain" description="Extracellular" evidence="5">
    <location>
        <begin position="273"/>
        <end position="284"/>
    </location>
</feature>
<feature type="transmembrane region" description="Helical; Name=7" evidence="1">
    <location>
        <begin position="285"/>
        <end position="305"/>
    </location>
</feature>
<feature type="topological domain" description="Cytoplasmic" evidence="5">
    <location>
        <begin position="306"/>
        <end position="376"/>
    </location>
</feature>
<feature type="disulfide bond" evidence="2">
    <location>
        <begin position="98"/>
        <end position="175"/>
    </location>
</feature>